<organism>
    <name type="scientific">Francisella tularensis subsp. tularensis (strain FSC 198)</name>
    <dbReference type="NCBI Taxonomy" id="393115"/>
    <lineage>
        <taxon>Bacteria</taxon>
        <taxon>Pseudomonadati</taxon>
        <taxon>Pseudomonadota</taxon>
        <taxon>Gammaproteobacteria</taxon>
        <taxon>Thiotrichales</taxon>
        <taxon>Francisellaceae</taxon>
        <taxon>Francisella</taxon>
    </lineage>
</organism>
<reference key="1">
    <citation type="journal article" date="2007" name="PLoS ONE">
        <title>Genome sequencing shows that European isolates of Francisella tularensis subspecies tularensis are almost identical to US laboratory strain Schu S4.</title>
        <authorList>
            <person name="Chaudhuri R.R."/>
            <person name="Ren C.-P."/>
            <person name="Desmond L."/>
            <person name="Vincent G.A."/>
            <person name="Silman N.J."/>
            <person name="Brehm J.K."/>
            <person name="Elmore M.J."/>
            <person name="Hudson M.J."/>
            <person name="Forsman M."/>
            <person name="Isherwood K.E."/>
            <person name="Gurycova D."/>
            <person name="Minton N.P."/>
            <person name="Titball R.W."/>
            <person name="Pallen M.J."/>
            <person name="Vipond R."/>
        </authorList>
    </citation>
    <scope>NUCLEOTIDE SEQUENCE [LARGE SCALE GENOMIC DNA]</scope>
    <source>
        <strain>FSC 198</strain>
    </source>
</reference>
<keyword id="KW-0687">Ribonucleoprotein</keyword>
<keyword id="KW-0689">Ribosomal protein</keyword>
<accession>Q14J59</accession>
<dbReference type="EMBL" id="AM286280">
    <property type="protein sequence ID" value="CAL08406.1"/>
    <property type="molecule type" value="Genomic_DNA"/>
</dbReference>
<dbReference type="SMR" id="Q14J59"/>
<dbReference type="KEGG" id="ftf:FTF0390c"/>
<dbReference type="HOGENOM" id="CLU_159258_1_1_6"/>
<dbReference type="GO" id="GO:1990904">
    <property type="term" value="C:ribonucleoprotein complex"/>
    <property type="evidence" value="ECO:0007669"/>
    <property type="project" value="UniProtKB-KW"/>
</dbReference>
<dbReference type="GO" id="GO:0005840">
    <property type="term" value="C:ribosome"/>
    <property type="evidence" value="ECO:0007669"/>
    <property type="project" value="UniProtKB-KW"/>
</dbReference>
<dbReference type="GO" id="GO:0003735">
    <property type="term" value="F:structural constituent of ribosome"/>
    <property type="evidence" value="ECO:0007669"/>
    <property type="project" value="InterPro"/>
</dbReference>
<dbReference type="GO" id="GO:0006412">
    <property type="term" value="P:translation"/>
    <property type="evidence" value="ECO:0007669"/>
    <property type="project" value="UniProtKB-UniRule"/>
</dbReference>
<dbReference type="Gene3D" id="1.20.5.1150">
    <property type="entry name" value="Ribosomal protein S8"/>
    <property type="match status" value="1"/>
</dbReference>
<dbReference type="HAMAP" id="MF_00358">
    <property type="entry name" value="Ribosomal_bS21"/>
    <property type="match status" value="1"/>
</dbReference>
<dbReference type="InterPro" id="IPR001911">
    <property type="entry name" value="Ribosomal_bS21"/>
</dbReference>
<dbReference type="InterPro" id="IPR038380">
    <property type="entry name" value="Ribosomal_bS21_sf"/>
</dbReference>
<dbReference type="NCBIfam" id="TIGR00030">
    <property type="entry name" value="S21p"/>
    <property type="match status" value="1"/>
</dbReference>
<dbReference type="Pfam" id="PF01165">
    <property type="entry name" value="Ribosomal_S21"/>
    <property type="match status" value="1"/>
</dbReference>
<dbReference type="PRINTS" id="PR00976">
    <property type="entry name" value="RIBOSOMALS21"/>
</dbReference>
<protein>
    <recommendedName>
        <fullName evidence="1">Small ribosomal subunit protein bS21A</fullName>
    </recommendedName>
    <alternativeName>
        <fullName evidence="2">30S ribosomal protein S21 1</fullName>
    </alternativeName>
</protein>
<gene>
    <name evidence="1" type="primary">rpsU1</name>
    <name type="ordered locus">FTF0390c</name>
</gene>
<comment type="similarity">
    <text evidence="1">Belongs to the bacterial ribosomal protein bS21 family.</text>
</comment>
<evidence type="ECO:0000255" key="1">
    <source>
        <dbReference type="HAMAP-Rule" id="MF_00358"/>
    </source>
</evidence>
<evidence type="ECO:0000305" key="2"/>
<sequence length="65" mass="7838">MLSIKVDERKPFDISLRNFKRACEKAGIKQELRDRQHYVKPTEKRKIAKRQAVKRARISQRRAFI</sequence>
<proteinExistence type="inferred from homology"/>
<feature type="chain" id="PRO_0000266677" description="Small ribosomal subunit protein bS21A">
    <location>
        <begin position="1"/>
        <end position="65"/>
    </location>
</feature>
<name>RS211_FRAT1</name>